<organism>
    <name type="scientific">Francisella tularensis subsp. mediasiatica (strain FSC147)</name>
    <dbReference type="NCBI Taxonomy" id="441952"/>
    <lineage>
        <taxon>Bacteria</taxon>
        <taxon>Pseudomonadati</taxon>
        <taxon>Pseudomonadota</taxon>
        <taxon>Gammaproteobacteria</taxon>
        <taxon>Thiotrichales</taxon>
        <taxon>Francisellaceae</taxon>
        <taxon>Francisella</taxon>
    </lineage>
</organism>
<protein>
    <recommendedName>
        <fullName evidence="1">Phenylalanine--tRNA ligase alpha subunit</fullName>
        <ecNumber evidence="1">6.1.1.20</ecNumber>
    </recommendedName>
    <alternativeName>
        <fullName evidence="1">Phenylalanyl-tRNA synthetase alpha subunit</fullName>
        <shortName evidence="1">PheRS</shortName>
    </alternativeName>
</protein>
<proteinExistence type="inferred from homology"/>
<feature type="chain" id="PRO_1000114875" description="Phenylalanine--tRNA ligase alpha subunit">
    <location>
        <begin position="1"/>
        <end position="337"/>
    </location>
</feature>
<feature type="binding site" evidence="1">
    <location>
        <position position="252"/>
    </location>
    <ligand>
        <name>Mg(2+)</name>
        <dbReference type="ChEBI" id="CHEBI:18420"/>
        <note>shared with beta subunit</note>
    </ligand>
</feature>
<comment type="catalytic activity">
    <reaction evidence="1">
        <text>tRNA(Phe) + L-phenylalanine + ATP = L-phenylalanyl-tRNA(Phe) + AMP + diphosphate + H(+)</text>
        <dbReference type="Rhea" id="RHEA:19413"/>
        <dbReference type="Rhea" id="RHEA-COMP:9668"/>
        <dbReference type="Rhea" id="RHEA-COMP:9699"/>
        <dbReference type="ChEBI" id="CHEBI:15378"/>
        <dbReference type="ChEBI" id="CHEBI:30616"/>
        <dbReference type="ChEBI" id="CHEBI:33019"/>
        <dbReference type="ChEBI" id="CHEBI:58095"/>
        <dbReference type="ChEBI" id="CHEBI:78442"/>
        <dbReference type="ChEBI" id="CHEBI:78531"/>
        <dbReference type="ChEBI" id="CHEBI:456215"/>
        <dbReference type="EC" id="6.1.1.20"/>
    </reaction>
</comment>
<comment type="cofactor">
    <cofactor evidence="1">
        <name>Mg(2+)</name>
        <dbReference type="ChEBI" id="CHEBI:18420"/>
    </cofactor>
    <text evidence="1">Binds 2 magnesium ions per tetramer.</text>
</comment>
<comment type="subunit">
    <text evidence="1">Tetramer of two alpha and two beta subunits.</text>
</comment>
<comment type="subcellular location">
    <subcellularLocation>
        <location evidence="1">Cytoplasm</location>
    </subcellularLocation>
</comment>
<comment type="similarity">
    <text evidence="1">Belongs to the class-II aminoacyl-tRNA synthetase family. Phe-tRNA synthetase alpha subunit type 1 subfamily.</text>
</comment>
<gene>
    <name evidence="1" type="primary">pheS</name>
    <name type="ordered locus">FTM_0946</name>
</gene>
<dbReference type="EC" id="6.1.1.20" evidence="1"/>
<dbReference type="EMBL" id="CP000915">
    <property type="protein sequence ID" value="ACD30877.1"/>
    <property type="molecule type" value="Genomic_DNA"/>
</dbReference>
<dbReference type="SMR" id="B2SGL8"/>
<dbReference type="KEGG" id="ftm:FTM_0946"/>
<dbReference type="HOGENOM" id="CLU_025086_0_1_6"/>
<dbReference type="GO" id="GO:0005737">
    <property type="term" value="C:cytoplasm"/>
    <property type="evidence" value="ECO:0007669"/>
    <property type="project" value="UniProtKB-SubCell"/>
</dbReference>
<dbReference type="GO" id="GO:0005524">
    <property type="term" value="F:ATP binding"/>
    <property type="evidence" value="ECO:0007669"/>
    <property type="project" value="UniProtKB-UniRule"/>
</dbReference>
<dbReference type="GO" id="GO:0000287">
    <property type="term" value="F:magnesium ion binding"/>
    <property type="evidence" value="ECO:0007669"/>
    <property type="project" value="UniProtKB-UniRule"/>
</dbReference>
<dbReference type="GO" id="GO:0004826">
    <property type="term" value="F:phenylalanine-tRNA ligase activity"/>
    <property type="evidence" value="ECO:0007669"/>
    <property type="project" value="UniProtKB-UniRule"/>
</dbReference>
<dbReference type="GO" id="GO:0000049">
    <property type="term" value="F:tRNA binding"/>
    <property type="evidence" value="ECO:0007669"/>
    <property type="project" value="InterPro"/>
</dbReference>
<dbReference type="GO" id="GO:0006432">
    <property type="term" value="P:phenylalanyl-tRNA aminoacylation"/>
    <property type="evidence" value="ECO:0007669"/>
    <property type="project" value="UniProtKB-UniRule"/>
</dbReference>
<dbReference type="CDD" id="cd00496">
    <property type="entry name" value="PheRS_alpha_core"/>
    <property type="match status" value="1"/>
</dbReference>
<dbReference type="FunFam" id="3.30.930.10:FF:000003">
    <property type="entry name" value="Phenylalanine--tRNA ligase alpha subunit"/>
    <property type="match status" value="1"/>
</dbReference>
<dbReference type="Gene3D" id="3.30.930.10">
    <property type="entry name" value="Bira Bifunctional Protein, Domain 2"/>
    <property type="match status" value="1"/>
</dbReference>
<dbReference type="HAMAP" id="MF_00281">
    <property type="entry name" value="Phe_tRNA_synth_alpha1"/>
    <property type="match status" value="1"/>
</dbReference>
<dbReference type="InterPro" id="IPR006195">
    <property type="entry name" value="aa-tRNA-synth_II"/>
</dbReference>
<dbReference type="InterPro" id="IPR045864">
    <property type="entry name" value="aa-tRNA-synth_II/BPL/LPL"/>
</dbReference>
<dbReference type="InterPro" id="IPR004529">
    <property type="entry name" value="Phe-tRNA-synth_IIc_asu"/>
</dbReference>
<dbReference type="InterPro" id="IPR004188">
    <property type="entry name" value="Phe-tRNA_ligase_II_N"/>
</dbReference>
<dbReference type="InterPro" id="IPR022911">
    <property type="entry name" value="Phe_tRNA_ligase_alpha1_bac"/>
</dbReference>
<dbReference type="InterPro" id="IPR002319">
    <property type="entry name" value="Phenylalanyl-tRNA_Synthase"/>
</dbReference>
<dbReference type="InterPro" id="IPR010978">
    <property type="entry name" value="tRNA-bd_arm"/>
</dbReference>
<dbReference type="NCBIfam" id="TIGR00468">
    <property type="entry name" value="pheS"/>
    <property type="match status" value="1"/>
</dbReference>
<dbReference type="PANTHER" id="PTHR11538:SF41">
    <property type="entry name" value="PHENYLALANINE--TRNA LIGASE, MITOCHONDRIAL"/>
    <property type="match status" value="1"/>
</dbReference>
<dbReference type="PANTHER" id="PTHR11538">
    <property type="entry name" value="PHENYLALANYL-TRNA SYNTHETASE"/>
    <property type="match status" value="1"/>
</dbReference>
<dbReference type="Pfam" id="PF02912">
    <property type="entry name" value="Phe_tRNA-synt_N"/>
    <property type="match status" value="1"/>
</dbReference>
<dbReference type="Pfam" id="PF01409">
    <property type="entry name" value="tRNA-synt_2d"/>
    <property type="match status" value="1"/>
</dbReference>
<dbReference type="SUPFAM" id="SSF55681">
    <property type="entry name" value="Class II aaRS and biotin synthetases"/>
    <property type="match status" value="1"/>
</dbReference>
<dbReference type="SUPFAM" id="SSF46589">
    <property type="entry name" value="tRNA-binding arm"/>
    <property type="match status" value="1"/>
</dbReference>
<dbReference type="PROSITE" id="PS50862">
    <property type="entry name" value="AA_TRNA_LIGASE_II"/>
    <property type="match status" value="1"/>
</dbReference>
<reference key="1">
    <citation type="journal article" date="2009" name="PLoS Pathog.">
        <title>Molecular evolutionary consequences of niche restriction in Francisella tularensis, a facultative intracellular pathogen.</title>
        <authorList>
            <person name="Larsson P."/>
            <person name="Elfsmark D."/>
            <person name="Svensson K."/>
            <person name="Wikstroem P."/>
            <person name="Forsman M."/>
            <person name="Brettin T."/>
            <person name="Keim P."/>
            <person name="Johansson A."/>
        </authorList>
    </citation>
    <scope>NUCLEOTIDE SEQUENCE [LARGE SCALE GENOMIC DNA]</scope>
    <source>
        <strain>FSC147</strain>
    </source>
</reference>
<name>SYFA_FRATM</name>
<keyword id="KW-0030">Aminoacyl-tRNA synthetase</keyword>
<keyword id="KW-0067">ATP-binding</keyword>
<keyword id="KW-0963">Cytoplasm</keyword>
<keyword id="KW-0436">Ligase</keyword>
<keyword id="KW-0460">Magnesium</keyword>
<keyword id="KW-0479">Metal-binding</keyword>
<keyword id="KW-0547">Nucleotide-binding</keyword>
<keyword id="KW-0648">Protein biosynthesis</keyword>
<accession>B2SGL8</accession>
<sequence length="337" mass="38491">MQIVEQMKDKALAELNLVKDKKTLDDIRVKYLGKKGELTEMMKLIATLPNDEKPKLGQAVNIAKQALQEAINLKLANFEEQELNEKLAQEKIDITLTGVGQNQGSLHPVTKTLNRIEAFFKQNGFAIEFGPEIESDYYNFETLNIPSHHPARAMHDTFYIDETHVLRTHTSGVQIRTMEKQQPPIRIIAPGRVYRCDSDITHTPMFHQVEGLLVDKDVSFADLKGLLHAFLNSFFEKDLKVRFRPSYFPFTEPSAEADIECVMCDGKGCRVCKHTGWLEVLGCGMVHPKVLKAGNIDSEKYQGFAFGMGVERLSMLRYGIDDLRMFFENDLRFLKQF</sequence>
<evidence type="ECO:0000255" key="1">
    <source>
        <dbReference type="HAMAP-Rule" id="MF_00281"/>
    </source>
</evidence>